<organism>
    <name type="scientific">Macaca ochreata subsp. brunnescens</name>
    <name type="common">Muna-buton macaque</name>
    <name type="synonym">Macaca brunnescens</name>
    <dbReference type="NCBI Taxonomy" id="90381"/>
    <lineage>
        <taxon>Eukaryota</taxon>
        <taxon>Metazoa</taxon>
        <taxon>Chordata</taxon>
        <taxon>Craniata</taxon>
        <taxon>Vertebrata</taxon>
        <taxon>Euteleostomi</taxon>
        <taxon>Mammalia</taxon>
        <taxon>Eutheria</taxon>
        <taxon>Euarchontoglires</taxon>
        <taxon>Primates</taxon>
        <taxon>Haplorrhini</taxon>
        <taxon>Catarrhini</taxon>
        <taxon>Cercopithecidae</taxon>
        <taxon>Cercopithecinae</taxon>
        <taxon>Macaca</taxon>
    </lineage>
</organism>
<evidence type="ECO:0000250" key="1">
    <source>
        <dbReference type="UniProtKB" id="P03901"/>
    </source>
</evidence>
<evidence type="ECO:0000250" key="2">
    <source>
        <dbReference type="UniProtKB" id="P03902"/>
    </source>
</evidence>
<evidence type="ECO:0000255" key="3"/>
<evidence type="ECO:0000305" key="4"/>
<feature type="chain" id="PRO_0000118439" description="NADH-ubiquinone oxidoreductase chain 4L">
    <location>
        <begin position="1"/>
        <end position="98"/>
    </location>
</feature>
<feature type="transmembrane region" description="Helical" evidence="3">
    <location>
        <begin position="1"/>
        <end position="21"/>
    </location>
</feature>
<feature type="transmembrane region" description="Helical" evidence="3">
    <location>
        <begin position="29"/>
        <end position="49"/>
    </location>
</feature>
<feature type="transmembrane region" description="Helical" evidence="3">
    <location>
        <begin position="61"/>
        <end position="81"/>
    </location>
</feature>
<protein>
    <recommendedName>
        <fullName>NADH-ubiquinone oxidoreductase chain 4L</fullName>
        <ecNumber>7.1.1.2</ecNumber>
    </recommendedName>
    <alternativeName>
        <fullName>NADH dehydrogenase subunit 4L</fullName>
    </alternativeName>
</protein>
<name>NU4LM_MACOB</name>
<sequence length="98" mass="10818">MIPTYMNIMLAFTISLLGMLTYRSHLMASLLCLEGMMMSLFIMTTLIALNTRSPLTNIMPIILLVFAACEAAVGLALLVSISNTYGLDYIHNLNLLQC</sequence>
<accession>Q9XL66</accession>
<proteinExistence type="inferred from homology"/>
<geneLocation type="mitochondrion"/>
<dbReference type="EC" id="7.1.1.2"/>
<dbReference type="EMBL" id="AF091425">
    <property type="protein sequence ID" value="AAD24738.1"/>
    <property type="molecule type" value="Genomic_DNA"/>
</dbReference>
<dbReference type="SMR" id="Q9XL66"/>
<dbReference type="GO" id="GO:0005743">
    <property type="term" value="C:mitochondrial inner membrane"/>
    <property type="evidence" value="ECO:0000250"/>
    <property type="project" value="UniProtKB"/>
</dbReference>
<dbReference type="GO" id="GO:0045271">
    <property type="term" value="C:respiratory chain complex I"/>
    <property type="evidence" value="ECO:0000250"/>
    <property type="project" value="UniProtKB"/>
</dbReference>
<dbReference type="GO" id="GO:0008137">
    <property type="term" value="F:NADH dehydrogenase (ubiquinone) activity"/>
    <property type="evidence" value="ECO:0000250"/>
    <property type="project" value="UniProtKB"/>
</dbReference>
<dbReference type="GO" id="GO:0042773">
    <property type="term" value="P:ATP synthesis coupled electron transport"/>
    <property type="evidence" value="ECO:0007669"/>
    <property type="project" value="InterPro"/>
</dbReference>
<dbReference type="FunFam" id="1.10.287.3510:FF:000002">
    <property type="entry name" value="NADH-ubiquinone oxidoreductase chain 4L"/>
    <property type="match status" value="1"/>
</dbReference>
<dbReference type="Gene3D" id="1.10.287.3510">
    <property type="match status" value="1"/>
</dbReference>
<dbReference type="InterPro" id="IPR001133">
    <property type="entry name" value="NADH_UbQ_OxRdtase_chain4L/K"/>
</dbReference>
<dbReference type="InterPro" id="IPR039428">
    <property type="entry name" value="NUOK/Mnh_C1-like"/>
</dbReference>
<dbReference type="PANTHER" id="PTHR11434:SF0">
    <property type="entry name" value="NADH-UBIQUINONE OXIDOREDUCTASE CHAIN 4L"/>
    <property type="match status" value="1"/>
</dbReference>
<dbReference type="PANTHER" id="PTHR11434">
    <property type="entry name" value="NADH-UBIQUINONE OXIDOREDUCTASE SUBUNIT ND4L"/>
    <property type="match status" value="1"/>
</dbReference>
<dbReference type="Pfam" id="PF00420">
    <property type="entry name" value="Oxidored_q2"/>
    <property type="match status" value="1"/>
</dbReference>
<gene>
    <name type="primary">MT-ND4L</name>
    <name type="synonym">MTND4L</name>
    <name type="synonym">NADH4L</name>
    <name type="synonym">ND4L</name>
</gene>
<comment type="function">
    <text evidence="1">Core subunit of the mitochondrial membrane respiratory chain NADH dehydrogenase (Complex I) which catalyzes electron transfer from NADH through the respiratory chain, using ubiquinone as an electron acceptor. Part of the enzyme membrane arm which is embedded in the lipid bilayer and involved in proton translocation.</text>
</comment>
<comment type="catalytic activity">
    <reaction evidence="1">
        <text>a ubiquinone + NADH + 5 H(+)(in) = a ubiquinol + NAD(+) + 4 H(+)(out)</text>
        <dbReference type="Rhea" id="RHEA:29091"/>
        <dbReference type="Rhea" id="RHEA-COMP:9565"/>
        <dbReference type="Rhea" id="RHEA-COMP:9566"/>
        <dbReference type="ChEBI" id="CHEBI:15378"/>
        <dbReference type="ChEBI" id="CHEBI:16389"/>
        <dbReference type="ChEBI" id="CHEBI:17976"/>
        <dbReference type="ChEBI" id="CHEBI:57540"/>
        <dbReference type="ChEBI" id="CHEBI:57945"/>
        <dbReference type="EC" id="7.1.1.2"/>
    </reaction>
    <physiologicalReaction direction="left-to-right" evidence="1">
        <dbReference type="Rhea" id="RHEA:29092"/>
    </physiologicalReaction>
</comment>
<comment type="subunit">
    <text evidence="2">Core subunit of respiratory chain NADH dehydrogenase (Complex I) which is composed of 45 different subunits.</text>
</comment>
<comment type="subcellular location">
    <subcellularLocation>
        <location evidence="2">Mitochondrion inner membrane</location>
        <topology evidence="3">Multi-pass membrane protein</topology>
    </subcellularLocation>
</comment>
<comment type="similarity">
    <text evidence="4">Belongs to the complex I subunit 4L family.</text>
</comment>
<reference key="1">
    <citation type="journal article" date="1999" name="Biol. J. Linn. Soc. Lond.">
        <title>Origin of the Sulawesi macaques (Cercopithecidae: Macaca) as suggested by mitochondrial DNA phylogeny.</title>
        <authorList>
            <person name="Evans B.J."/>
            <person name="Morales J.C."/>
            <person name="Supriatna J."/>
            <person name="Melnick D.J."/>
        </authorList>
    </citation>
    <scope>NUCLEOTIDE SEQUENCE [GENOMIC DNA]</scope>
</reference>
<keyword id="KW-0249">Electron transport</keyword>
<keyword id="KW-0472">Membrane</keyword>
<keyword id="KW-0496">Mitochondrion</keyword>
<keyword id="KW-0999">Mitochondrion inner membrane</keyword>
<keyword id="KW-0520">NAD</keyword>
<keyword id="KW-0679">Respiratory chain</keyword>
<keyword id="KW-1278">Translocase</keyword>
<keyword id="KW-0812">Transmembrane</keyword>
<keyword id="KW-1133">Transmembrane helix</keyword>
<keyword id="KW-0813">Transport</keyword>
<keyword id="KW-0830">Ubiquinone</keyword>